<proteinExistence type="inferred from homology"/>
<reference key="1">
    <citation type="journal article" date="2004" name="Proc. Natl. Acad. Sci. U.S.A.">
        <title>Insights into the evolution of Yersinia pestis through whole-genome comparison with Yersinia pseudotuberculosis.</title>
        <authorList>
            <person name="Chain P.S.G."/>
            <person name="Carniel E."/>
            <person name="Larimer F.W."/>
            <person name="Lamerdin J."/>
            <person name="Stoutland P.O."/>
            <person name="Regala W.M."/>
            <person name="Georgescu A.M."/>
            <person name="Vergez L.M."/>
            <person name="Land M.L."/>
            <person name="Motin V.L."/>
            <person name="Brubaker R.R."/>
            <person name="Fowler J."/>
            <person name="Hinnebusch J."/>
            <person name="Marceau M."/>
            <person name="Medigue C."/>
            <person name="Simonet M."/>
            <person name="Chenal-Francisque V."/>
            <person name="Souza B."/>
            <person name="Dacheux D."/>
            <person name="Elliott J.M."/>
            <person name="Derbise A."/>
            <person name="Hauser L.J."/>
            <person name="Garcia E."/>
        </authorList>
    </citation>
    <scope>NUCLEOTIDE SEQUENCE [LARGE SCALE GENOMIC DNA]</scope>
    <source>
        <strain>IP32953</strain>
    </source>
</reference>
<sequence length="341" mass="37839">MATIKDVAKHAGVSTTTVSHVINKTRFVAENTKAAVWAAIKELHYSPSAVARSLKVNHTKSIGLLATSSEAPYFAEVIEAVENSCYSKGYTLILCNSHNNLDKQKAYLAMLAQKRVDGLLVMCSEYPDQLLGMLEDYRNIPMVVMDWGTARGDFTDSIIDNAFEGGYLAGRYLIERGHRDIGAIPGQLARNTGGGRHQGFLKALEEANIPVREEWIVQGDFEPESGYKAMHQILTQKHRPTAVFCGGDIMAMGAICAADELGLRVPQDISVIGYDNVRNARYFSPALTTIHQPKERLGETAFAMLLDRIVSKREDPQTIEVHPKLVERRSVADGPFRDYRR</sequence>
<gene>
    <name evidence="1" type="primary">purR</name>
    <name type="ordered locus">YPTB2300</name>
</gene>
<organism>
    <name type="scientific">Yersinia pseudotuberculosis serotype I (strain IP32953)</name>
    <dbReference type="NCBI Taxonomy" id="273123"/>
    <lineage>
        <taxon>Bacteria</taxon>
        <taxon>Pseudomonadati</taxon>
        <taxon>Pseudomonadota</taxon>
        <taxon>Gammaproteobacteria</taxon>
        <taxon>Enterobacterales</taxon>
        <taxon>Yersiniaceae</taxon>
        <taxon>Yersinia</taxon>
    </lineage>
</organism>
<dbReference type="EMBL" id="BX936398">
    <property type="protein sequence ID" value="CAH21538.1"/>
    <property type="molecule type" value="Genomic_DNA"/>
</dbReference>
<dbReference type="RefSeq" id="WP_002210943.1">
    <property type="nucleotide sequence ID" value="NZ_CP009712.1"/>
</dbReference>
<dbReference type="SMR" id="Q66A32"/>
<dbReference type="GeneID" id="57976289"/>
<dbReference type="KEGG" id="ypo:BZ17_158"/>
<dbReference type="KEGG" id="yps:YPTB2300"/>
<dbReference type="PATRIC" id="fig|273123.14.peg.165"/>
<dbReference type="UniPathway" id="UPA00488"/>
<dbReference type="Proteomes" id="UP000001011">
    <property type="component" value="Chromosome"/>
</dbReference>
<dbReference type="GO" id="GO:0003700">
    <property type="term" value="F:DNA-binding transcription factor activity"/>
    <property type="evidence" value="ECO:0007669"/>
    <property type="project" value="TreeGrafter"/>
</dbReference>
<dbReference type="GO" id="GO:0000976">
    <property type="term" value="F:transcription cis-regulatory region binding"/>
    <property type="evidence" value="ECO:0007669"/>
    <property type="project" value="TreeGrafter"/>
</dbReference>
<dbReference type="GO" id="GO:0045892">
    <property type="term" value="P:negative regulation of DNA-templated transcription"/>
    <property type="evidence" value="ECO:0007669"/>
    <property type="project" value="UniProtKB-UniRule"/>
</dbReference>
<dbReference type="GO" id="GO:0006164">
    <property type="term" value="P:purine nucleotide biosynthetic process"/>
    <property type="evidence" value="ECO:0007669"/>
    <property type="project" value="UniProtKB-UniPathway"/>
</dbReference>
<dbReference type="CDD" id="cd01392">
    <property type="entry name" value="HTH_LacI"/>
    <property type="match status" value="1"/>
</dbReference>
<dbReference type="CDD" id="cd06275">
    <property type="entry name" value="PBP1_PurR"/>
    <property type="match status" value="1"/>
</dbReference>
<dbReference type="FunFam" id="1.10.260.40:FF:000002">
    <property type="entry name" value="HTH-type transcriptional repressor PurR"/>
    <property type="match status" value="1"/>
</dbReference>
<dbReference type="FunFam" id="3.40.50.2300:FF:000045">
    <property type="entry name" value="HTH-type transcriptional repressor PurR"/>
    <property type="match status" value="1"/>
</dbReference>
<dbReference type="Gene3D" id="3.40.50.2300">
    <property type="match status" value="2"/>
</dbReference>
<dbReference type="Gene3D" id="1.10.260.40">
    <property type="entry name" value="lambda repressor-like DNA-binding domains"/>
    <property type="match status" value="1"/>
</dbReference>
<dbReference type="HAMAP" id="MF_01277">
    <property type="entry name" value="HTH_type_PurR"/>
    <property type="match status" value="1"/>
</dbReference>
<dbReference type="InterPro" id="IPR000843">
    <property type="entry name" value="HTH_LacI"/>
</dbReference>
<dbReference type="InterPro" id="IPR046335">
    <property type="entry name" value="LacI/GalR-like_sensor"/>
</dbReference>
<dbReference type="InterPro" id="IPR010982">
    <property type="entry name" value="Lambda_DNA-bd_dom_sf"/>
</dbReference>
<dbReference type="InterPro" id="IPR028082">
    <property type="entry name" value="Peripla_BP_I"/>
</dbReference>
<dbReference type="InterPro" id="IPR023588">
    <property type="entry name" value="Tscrpt_reg_HTH_PurR"/>
</dbReference>
<dbReference type="NCBIfam" id="NF007979">
    <property type="entry name" value="PRK10703.1"/>
    <property type="match status" value="1"/>
</dbReference>
<dbReference type="PANTHER" id="PTHR30146:SF148">
    <property type="entry name" value="HTH-TYPE TRANSCRIPTIONAL REPRESSOR PURR-RELATED"/>
    <property type="match status" value="1"/>
</dbReference>
<dbReference type="PANTHER" id="PTHR30146">
    <property type="entry name" value="LACI-RELATED TRANSCRIPTIONAL REPRESSOR"/>
    <property type="match status" value="1"/>
</dbReference>
<dbReference type="Pfam" id="PF00356">
    <property type="entry name" value="LacI"/>
    <property type="match status" value="1"/>
</dbReference>
<dbReference type="Pfam" id="PF13377">
    <property type="entry name" value="Peripla_BP_3"/>
    <property type="match status" value="1"/>
</dbReference>
<dbReference type="PRINTS" id="PR00036">
    <property type="entry name" value="HTHLACI"/>
</dbReference>
<dbReference type="SMART" id="SM00354">
    <property type="entry name" value="HTH_LACI"/>
    <property type="match status" value="1"/>
</dbReference>
<dbReference type="SUPFAM" id="SSF47413">
    <property type="entry name" value="lambda repressor-like DNA-binding domains"/>
    <property type="match status" value="1"/>
</dbReference>
<dbReference type="SUPFAM" id="SSF53822">
    <property type="entry name" value="Periplasmic binding protein-like I"/>
    <property type="match status" value="1"/>
</dbReference>
<dbReference type="PROSITE" id="PS00356">
    <property type="entry name" value="HTH_LACI_1"/>
    <property type="match status" value="1"/>
</dbReference>
<dbReference type="PROSITE" id="PS50932">
    <property type="entry name" value="HTH_LACI_2"/>
    <property type="match status" value="1"/>
</dbReference>
<name>PURR_YERPS</name>
<accession>Q66A32</accession>
<keyword id="KW-0238">DNA-binding</keyword>
<keyword id="KW-0658">Purine biosynthesis</keyword>
<keyword id="KW-0678">Repressor</keyword>
<keyword id="KW-0804">Transcription</keyword>
<keyword id="KW-0805">Transcription regulation</keyword>
<protein>
    <recommendedName>
        <fullName evidence="1">HTH-type transcriptional repressor PurR</fullName>
    </recommendedName>
    <alternativeName>
        <fullName evidence="1">Pur regulon repressor</fullName>
    </alternativeName>
    <alternativeName>
        <fullName evidence="1">Purine nucleotide synthesis repressor</fullName>
    </alternativeName>
</protein>
<feature type="chain" id="PRO_0000279680" description="HTH-type transcriptional repressor PurR">
    <location>
        <begin position="1"/>
        <end position="341"/>
    </location>
</feature>
<feature type="domain" description="HTH lacI-type" evidence="1">
    <location>
        <begin position="2"/>
        <end position="56"/>
    </location>
</feature>
<feature type="DNA-binding region" description="H-T-H motif" evidence="1">
    <location>
        <begin position="4"/>
        <end position="23"/>
    </location>
</feature>
<feature type="DNA-binding region" evidence="1">
    <location>
        <begin position="48"/>
        <end position="56"/>
    </location>
</feature>
<feature type="binding site" evidence="1">
    <location>
        <position position="73"/>
    </location>
    <ligand>
        <name>hypoxanthine</name>
        <dbReference type="ChEBI" id="CHEBI:17368"/>
    </ligand>
</feature>
<feature type="binding site" evidence="1">
    <location>
        <position position="190"/>
    </location>
    <ligand>
        <name>hypoxanthine</name>
        <dbReference type="ChEBI" id="CHEBI:17368"/>
    </ligand>
</feature>
<feature type="binding site" evidence="1">
    <location>
        <position position="192"/>
    </location>
    <ligand>
        <name>hypoxanthine</name>
        <dbReference type="ChEBI" id="CHEBI:17368"/>
    </ligand>
</feature>
<feature type="binding site" evidence="1">
    <location>
        <position position="221"/>
    </location>
    <ligand>
        <name>hypoxanthine</name>
        <dbReference type="ChEBI" id="CHEBI:17368"/>
    </ligand>
</feature>
<feature type="binding site" evidence="1">
    <location>
        <position position="275"/>
    </location>
    <ligand>
        <name>hypoxanthine</name>
        <dbReference type="ChEBI" id="CHEBI:17368"/>
    </ligand>
</feature>
<comment type="function">
    <text evidence="1">Is the main repressor of the genes involved in the de novo synthesis of purine nucleotides, regulating purB, purC, purEK, purF, purHD, purL, purMN and guaBA expression. PurR is allosterically activated to bind its cognate DNA by binding the purine corepressors, hypoxanthine or guanine, thereby effecting transcription repression.</text>
</comment>
<comment type="pathway">
    <text>Purine metabolism; purine nucleotide biosynthesis [regulation].</text>
</comment>
<comment type="subunit">
    <text evidence="1">Homodimer.</text>
</comment>
<comment type="domain">
    <text evidence="1">Consists of two structural and functional domains: an N-terminal DNA-binding domain, approximately the first 60 residues, and a larger C-terminal domain, approximately 280 residues, which imparts the function of corepressor binding and oligomerization.</text>
</comment>
<evidence type="ECO:0000255" key="1">
    <source>
        <dbReference type="HAMAP-Rule" id="MF_01277"/>
    </source>
</evidence>